<accession>Q0T6G3</accession>
<keyword id="KW-0326">Glycosidase</keyword>
<keyword id="KW-0378">Hydrolase</keyword>
<gene>
    <name type="primary">ybiA</name>
    <name type="ordered locus">SFV_0782</name>
</gene>
<sequence>MPVRAQRIQHVMQDTIINFYSTSDDYGDFSNFAARPIKVDGNTWPTSEHYFQAQKFLDEKYREEIRRVSSPMVAARMGRNRSKPLRKNWESVKEQVMRKALRAKFEQHAELRVLLLATAPAKLVEHTENDAYWGDGGNGKGKNRLGYLLMELREQLAIEK</sequence>
<dbReference type="EC" id="3.2.2.-"/>
<dbReference type="EMBL" id="CP000266">
    <property type="protein sequence ID" value="ABF03014.1"/>
    <property type="molecule type" value="Genomic_DNA"/>
</dbReference>
<dbReference type="RefSeq" id="WP_001145124.1">
    <property type="nucleotide sequence ID" value="NC_008258.1"/>
</dbReference>
<dbReference type="SMR" id="Q0T6G3"/>
<dbReference type="KEGG" id="sfv:SFV_0782"/>
<dbReference type="HOGENOM" id="CLU_084247_3_1_6"/>
<dbReference type="Proteomes" id="UP000000659">
    <property type="component" value="Chromosome"/>
</dbReference>
<dbReference type="GO" id="GO:0016798">
    <property type="term" value="F:hydrolase activity, acting on glycosyl bonds"/>
    <property type="evidence" value="ECO:0007669"/>
    <property type="project" value="UniProtKB-KW"/>
</dbReference>
<dbReference type="CDD" id="cd15457">
    <property type="entry name" value="NADAR"/>
    <property type="match status" value="1"/>
</dbReference>
<dbReference type="FunFam" id="1.10.357.40:FF:000001">
    <property type="entry name" value="Swarming motility protein ybiA"/>
    <property type="match status" value="1"/>
</dbReference>
<dbReference type="Gene3D" id="1.10.357.40">
    <property type="entry name" value="YbiA-like"/>
    <property type="match status" value="1"/>
</dbReference>
<dbReference type="InterPro" id="IPR012816">
    <property type="entry name" value="NADAR"/>
</dbReference>
<dbReference type="InterPro" id="IPR037238">
    <property type="entry name" value="YbiA-like_sf"/>
</dbReference>
<dbReference type="NCBIfam" id="TIGR02464">
    <property type="entry name" value="ribofla_fusion"/>
    <property type="match status" value="1"/>
</dbReference>
<dbReference type="Pfam" id="PF08719">
    <property type="entry name" value="NADAR"/>
    <property type="match status" value="1"/>
</dbReference>
<dbReference type="SUPFAM" id="SSF143990">
    <property type="entry name" value="YbiA-like"/>
    <property type="match status" value="1"/>
</dbReference>
<protein>
    <recommendedName>
        <fullName>N-glycosidase YbiA</fullName>
        <ecNumber>3.2.2.-</ecNumber>
    </recommendedName>
    <alternativeName>
        <fullName>Riboflavin biosynthesis intermediates N-glycosidase</fullName>
    </alternativeName>
</protein>
<comment type="function">
    <text evidence="1">Catalyzes the hydrolysis of the N-glycosidic bond in the first two intermediates of riboflavin biosynthesis, which are highly reactive metabolites, yielding relatively innocuous products. Thus, can divert a surplus of harmful intermediates into relatively harmless products and pre-empt the damage these intermediates would otherwise do. Helps maintain flavin levels. May act on other substrates in vivo. Has no activity against GTP, nucleoside monophosphates or ADP-ribose. Is Required for swarming motility.</text>
</comment>
<comment type="catalytic activity">
    <reaction evidence="1">
        <text>2,5-diamino-6-hydroxy-4-(5-phosphoribosylamino)-pyrimidine + H2O = 2,5,6-triamino-4-hydroxypyrimidine + D-ribose 5-phosphate</text>
        <dbReference type="Rhea" id="RHEA:23436"/>
        <dbReference type="ChEBI" id="CHEBI:15377"/>
        <dbReference type="ChEBI" id="CHEBI:58614"/>
        <dbReference type="ChEBI" id="CHEBI:78346"/>
        <dbReference type="ChEBI" id="CHEBI:137796"/>
    </reaction>
</comment>
<comment type="catalytic activity">
    <reaction evidence="1">
        <text>5-amino-6-(5-phospho-D-ribosylamino)uracil + H2O = 5,6-diaminouracil + D-ribose 5-phosphate</text>
        <dbReference type="Rhea" id="RHEA:55020"/>
        <dbReference type="ChEBI" id="CHEBI:15377"/>
        <dbReference type="ChEBI" id="CHEBI:46252"/>
        <dbReference type="ChEBI" id="CHEBI:58453"/>
        <dbReference type="ChEBI" id="CHEBI:78346"/>
    </reaction>
</comment>
<comment type="similarity">
    <text evidence="2">Belongs to the YbiA family.</text>
</comment>
<evidence type="ECO:0000250" key="1">
    <source>
        <dbReference type="UniProtKB" id="P30176"/>
    </source>
</evidence>
<evidence type="ECO:0000305" key="2"/>
<organism>
    <name type="scientific">Shigella flexneri serotype 5b (strain 8401)</name>
    <dbReference type="NCBI Taxonomy" id="373384"/>
    <lineage>
        <taxon>Bacteria</taxon>
        <taxon>Pseudomonadati</taxon>
        <taxon>Pseudomonadota</taxon>
        <taxon>Gammaproteobacteria</taxon>
        <taxon>Enterobacterales</taxon>
        <taxon>Enterobacteriaceae</taxon>
        <taxon>Shigella</taxon>
    </lineage>
</organism>
<feature type="chain" id="PRO_0000287340" description="N-glycosidase YbiA">
    <location>
        <begin position="1"/>
        <end position="160"/>
    </location>
</feature>
<reference key="1">
    <citation type="journal article" date="2006" name="BMC Genomics">
        <title>Complete genome sequence of Shigella flexneri 5b and comparison with Shigella flexneri 2a.</title>
        <authorList>
            <person name="Nie H."/>
            <person name="Yang F."/>
            <person name="Zhang X."/>
            <person name="Yang J."/>
            <person name="Chen L."/>
            <person name="Wang J."/>
            <person name="Xiong Z."/>
            <person name="Peng J."/>
            <person name="Sun L."/>
            <person name="Dong J."/>
            <person name="Xue Y."/>
            <person name="Xu X."/>
            <person name="Chen S."/>
            <person name="Yao Z."/>
            <person name="Shen Y."/>
            <person name="Jin Q."/>
        </authorList>
    </citation>
    <scope>NUCLEOTIDE SEQUENCE [LARGE SCALE GENOMIC DNA]</scope>
    <source>
        <strain>8401</strain>
    </source>
</reference>
<proteinExistence type="inferred from homology"/>
<name>RIBX_SHIF8</name>